<organism>
    <name type="scientific">Streptococcus pyogenes serotype M18 (strain MGAS8232)</name>
    <dbReference type="NCBI Taxonomy" id="186103"/>
    <lineage>
        <taxon>Bacteria</taxon>
        <taxon>Bacillati</taxon>
        <taxon>Bacillota</taxon>
        <taxon>Bacilli</taxon>
        <taxon>Lactobacillales</taxon>
        <taxon>Streptococcaceae</taxon>
        <taxon>Streptococcus</taxon>
    </lineage>
</organism>
<reference key="1">
    <citation type="journal article" date="2002" name="Proc. Natl. Acad. Sci. U.S.A.">
        <title>Genome sequence and comparative microarray analysis of serotype M18 group A Streptococcus strains associated with acute rheumatic fever outbreaks.</title>
        <authorList>
            <person name="Smoot J.C."/>
            <person name="Barbian K.D."/>
            <person name="Van Gompel J.J."/>
            <person name="Smoot L.M."/>
            <person name="Chaussee M.S."/>
            <person name="Sylva G.L."/>
            <person name="Sturdevant D.E."/>
            <person name="Ricklefs S.M."/>
            <person name="Porcella S.F."/>
            <person name="Parkins L.D."/>
            <person name="Beres S.B."/>
            <person name="Campbell D.S."/>
            <person name="Smith T.M."/>
            <person name="Zhang Q."/>
            <person name="Kapur V."/>
            <person name="Daly J.A."/>
            <person name="Veasy L.G."/>
            <person name="Musser J.M."/>
        </authorList>
    </citation>
    <scope>NUCLEOTIDE SEQUENCE [LARGE SCALE GENOMIC DNA]</scope>
    <source>
        <strain>MGAS8232</strain>
    </source>
</reference>
<comment type="function">
    <text evidence="1">Catalyzes the conversion of glucosamine-6-phosphate to glucosamine-1-phosphate.</text>
</comment>
<comment type="catalytic activity">
    <reaction evidence="1">
        <text>alpha-D-glucosamine 1-phosphate = D-glucosamine 6-phosphate</text>
        <dbReference type="Rhea" id="RHEA:23424"/>
        <dbReference type="ChEBI" id="CHEBI:58516"/>
        <dbReference type="ChEBI" id="CHEBI:58725"/>
        <dbReference type="EC" id="5.4.2.10"/>
    </reaction>
</comment>
<comment type="cofactor">
    <cofactor evidence="1">
        <name>Mg(2+)</name>
        <dbReference type="ChEBI" id="CHEBI:18420"/>
    </cofactor>
    <text evidence="1">Binds 1 Mg(2+) ion per subunit.</text>
</comment>
<comment type="PTM">
    <text evidence="1">Activated by phosphorylation.</text>
</comment>
<comment type="similarity">
    <text evidence="1">Belongs to the phosphohexose mutase family.</text>
</comment>
<gene>
    <name evidence="1" type="primary">glmM</name>
    <name type="ordered locus">spyM18_1020</name>
</gene>
<feature type="chain" id="PRO_0000147976" description="Phosphoglucosamine mutase">
    <location>
        <begin position="1"/>
        <end position="451"/>
    </location>
</feature>
<feature type="active site" description="Phosphoserine intermediate" evidence="1">
    <location>
        <position position="101"/>
    </location>
</feature>
<feature type="binding site" description="via phosphate group" evidence="1">
    <location>
        <position position="101"/>
    </location>
    <ligand>
        <name>Mg(2+)</name>
        <dbReference type="ChEBI" id="CHEBI:18420"/>
    </ligand>
</feature>
<feature type="binding site" evidence="1">
    <location>
        <position position="240"/>
    </location>
    <ligand>
        <name>Mg(2+)</name>
        <dbReference type="ChEBI" id="CHEBI:18420"/>
    </ligand>
</feature>
<feature type="binding site" evidence="1">
    <location>
        <position position="242"/>
    </location>
    <ligand>
        <name>Mg(2+)</name>
        <dbReference type="ChEBI" id="CHEBI:18420"/>
    </ligand>
</feature>
<feature type="binding site" evidence="1">
    <location>
        <position position="244"/>
    </location>
    <ligand>
        <name>Mg(2+)</name>
        <dbReference type="ChEBI" id="CHEBI:18420"/>
    </ligand>
</feature>
<feature type="modified residue" description="Phosphoserine" evidence="1">
    <location>
        <position position="101"/>
    </location>
</feature>
<accession>Q8P179</accession>
<dbReference type="EC" id="5.4.2.10" evidence="1"/>
<dbReference type="EMBL" id="AE009949">
    <property type="protein sequence ID" value="AAL97655.1"/>
    <property type="molecule type" value="Genomic_DNA"/>
</dbReference>
<dbReference type="RefSeq" id="WP_011017716.1">
    <property type="nucleotide sequence ID" value="NC_003485.1"/>
</dbReference>
<dbReference type="SMR" id="Q8P179"/>
<dbReference type="KEGG" id="spm:spyM18_1020"/>
<dbReference type="HOGENOM" id="CLU_016950_7_0_9"/>
<dbReference type="GO" id="GO:0005829">
    <property type="term" value="C:cytosol"/>
    <property type="evidence" value="ECO:0007669"/>
    <property type="project" value="TreeGrafter"/>
</dbReference>
<dbReference type="GO" id="GO:0000287">
    <property type="term" value="F:magnesium ion binding"/>
    <property type="evidence" value="ECO:0007669"/>
    <property type="project" value="UniProtKB-UniRule"/>
</dbReference>
<dbReference type="GO" id="GO:0008966">
    <property type="term" value="F:phosphoglucosamine mutase activity"/>
    <property type="evidence" value="ECO:0007669"/>
    <property type="project" value="UniProtKB-UniRule"/>
</dbReference>
<dbReference type="GO" id="GO:0004615">
    <property type="term" value="F:phosphomannomutase activity"/>
    <property type="evidence" value="ECO:0007669"/>
    <property type="project" value="TreeGrafter"/>
</dbReference>
<dbReference type="GO" id="GO:0005975">
    <property type="term" value="P:carbohydrate metabolic process"/>
    <property type="evidence" value="ECO:0007669"/>
    <property type="project" value="InterPro"/>
</dbReference>
<dbReference type="GO" id="GO:0009252">
    <property type="term" value="P:peptidoglycan biosynthetic process"/>
    <property type="evidence" value="ECO:0007669"/>
    <property type="project" value="TreeGrafter"/>
</dbReference>
<dbReference type="GO" id="GO:0006048">
    <property type="term" value="P:UDP-N-acetylglucosamine biosynthetic process"/>
    <property type="evidence" value="ECO:0007669"/>
    <property type="project" value="TreeGrafter"/>
</dbReference>
<dbReference type="CDD" id="cd05802">
    <property type="entry name" value="GlmM"/>
    <property type="match status" value="1"/>
</dbReference>
<dbReference type="FunFam" id="3.30.310.50:FF:000001">
    <property type="entry name" value="Phosphoglucosamine mutase"/>
    <property type="match status" value="1"/>
</dbReference>
<dbReference type="FunFam" id="3.40.120.10:FF:000001">
    <property type="entry name" value="Phosphoglucosamine mutase"/>
    <property type="match status" value="1"/>
</dbReference>
<dbReference type="FunFam" id="3.40.120.10:FF:000002">
    <property type="entry name" value="Phosphoglucosamine mutase"/>
    <property type="match status" value="1"/>
</dbReference>
<dbReference type="Gene3D" id="3.40.120.10">
    <property type="entry name" value="Alpha-D-Glucose-1,6-Bisphosphate, subunit A, domain 3"/>
    <property type="match status" value="3"/>
</dbReference>
<dbReference type="Gene3D" id="3.30.310.50">
    <property type="entry name" value="Alpha-D-phosphohexomutase, C-terminal domain"/>
    <property type="match status" value="1"/>
</dbReference>
<dbReference type="HAMAP" id="MF_01554_B">
    <property type="entry name" value="GlmM_B"/>
    <property type="match status" value="1"/>
</dbReference>
<dbReference type="InterPro" id="IPR005844">
    <property type="entry name" value="A-D-PHexomutase_a/b/a-I"/>
</dbReference>
<dbReference type="InterPro" id="IPR016055">
    <property type="entry name" value="A-D-PHexomutase_a/b/a-I/II/III"/>
</dbReference>
<dbReference type="InterPro" id="IPR005845">
    <property type="entry name" value="A-D-PHexomutase_a/b/a-II"/>
</dbReference>
<dbReference type="InterPro" id="IPR005846">
    <property type="entry name" value="A-D-PHexomutase_a/b/a-III"/>
</dbReference>
<dbReference type="InterPro" id="IPR005843">
    <property type="entry name" value="A-D-PHexomutase_C"/>
</dbReference>
<dbReference type="InterPro" id="IPR036900">
    <property type="entry name" value="A-D-PHexomutase_C_sf"/>
</dbReference>
<dbReference type="InterPro" id="IPR016066">
    <property type="entry name" value="A-D-PHexomutase_CS"/>
</dbReference>
<dbReference type="InterPro" id="IPR005841">
    <property type="entry name" value="Alpha-D-phosphohexomutase_SF"/>
</dbReference>
<dbReference type="InterPro" id="IPR006352">
    <property type="entry name" value="GlmM_bact"/>
</dbReference>
<dbReference type="InterPro" id="IPR050060">
    <property type="entry name" value="Phosphoglucosamine_mutase"/>
</dbReference>
<dbReference type="NCBIfam" id="TIGR01455">
    <property type="entry name" value="glmM"/>
    <property type="match status" value="1"/>
</dbReference>
<dbReference type="PANTHER" id="PTHR42946:SF1">
    <property type="entry name" value="PHOSPHOGLUCOMUTASE (ALPHA-D-GLUCOSE-1,6-BISPHOSPHATE-DEPENDENT)"/>
    <property type="match status" value="1"/>
</dbReference>
<dbReference type="PANTHER" id="PTHR42946">
    <property type="entry name" value="PHOSPHOHEXOSE MUTASE"/>
    <property type="match status" value="1"/>
</dbReference>
<dbReference type="Pfam" id="PF02878">
    <property type="entry name" value="PGM_PMM_I"/>
    <property type="match status" value="1"/>
</dbReference>
<dbReference type="Pfam" id="PF02879">
    <property type="entry name" value="PGM_PMM_II"/>
    <property type="match status" value="1"/>
</dbReference>
<dbReference type="Pfam" id="PF02880">
    <property type="entry name" value="PGM_PMM_III"/>
    <property type="match status" value="1"/>
</dbReference>
<dbReference type="Pfam" id="PF00408">
    <property type="entry name" value="PGM_PMM_IV"/>
    <property type="match status" value="1"/>
</dbReference>
<dbReference type="PRINTS" id="PR00509">
    <property type="entry name" value="PGMPMM"/>
</dbReference>
<dbReference type="SUPFAM" id="SSF55957">
    <property type="entry name" value="Phosphoglucomutase, C-terminal domain"/>
    <property type="match status" value="1"/>
</dbReference>
<dbReference type="SUPFAM" id="SSF53738">
    <property type="entry name" value="Phosphoglucomutase, first 3 domains"/>
    <property type="match status" value="3"/>
</dbReference>
<dbReference type="PROSITE" id="PS00710">
    <property type="entry name" value="PGM_PMM"/>
    <property type="match status" value="1"/>
</dbReference>
<sequence length="451" mass="48350">MGKYFGTDGVRGEANVELTPELAFKLGRFGGYVLSQHETERPKVFVARDTRISGEMLESALIAGLLSVGIEVYKLGVLATPGVSYLVRTEKASAGVMISASHNPALDNGIKFFGNDGFKLADDQELEIEALLDAPEDTLPRPSAEGLGTLVDYPEGLRKYEKFLVTTGTDLSGMTVALDTANGAASVSARDVFLDLNAEIAVIGEKPNGLNINDGVGSTHPEQLQELVKETGADLGLAFDGDSDRLIAVDETGEIVDGDRIMFIIGKYLSEKGLLAHNTIVTTVMSNLGFHKALDKQGINKAIAAVGDRYVVEEMRSSGYNLGGEQSGHVIIMDYNTTGDGQLTAIQLAKVMKETGKSLSELAAEVTIYPQKLVNIRVENSMKDRAMEVPAIANIIAKMEDEMAGNGRILVRPSGTEPLLRVMAEAPTDAKVDYYVDTIADVVRTEIGCDN</sequence>
<proteinExistence type="inferred from homology"/>
<name>GLMM_STRP8</name>
<keyword id="KW-0413">Isomerase</keyword>
<keyword id="KW-0460">Magnesium</keyword>
<keyword id="KW-0479">Metal-binding</keyword>
<keyword id="KW-0597">Phosphoprotein</keyword>
<protein>
    <recommendedName>
        <fullName evidence="1">Phosphoglucosamine mutase</fullName>
        <ecNumber evidence="1">5.4.2.10</ecNumber>
    </recommendedName>
</protein>
<evidence type="ECO:0000255" key="1">
    <source>
        <dbReference type="HAMAP-Rule" id="MF_01554"/>
    </source>
</evidence>